<sequence>MSQKEQTLMTPYLQFNRHQWAALRDSVPMTLTEEEITRLKGINEDLSLEEVAEIYLPLSRLLNFYISSNLRRQAVLEQFLGTNGQRIPYIISIAGSVAVGKSTTARVLQALLSRWPEHRHVELITTDGFLHPNSVLKERGLMKKKGFPQSYDMHRLVKFVSDLKSGVPQATAPVYSHLIYDVIPNGDKTVAQPDILILEGLNVLQSGMDYPHDPHHVFVSDFVDFSIYVDAPEELLKSWYINRFLKFREGAFTDPDSYFHNYAKLSKEEAVDIATSLWNEINLMNLKENILPTRERASLIMTKSANHSVNQVRLRK</sequence>
<proteinExistence type="inferred from homology"/>
<dbReference type="EC" id="2.7.1.33" evidence="1"/>
<dbReference type="EMBL" id="CP000647">
    <property type="protein sequence ID" value="ABR79715.1"/>
    <property type="status" value="ALT_INIT"/>
    <property type="molecule type" value="Genomic_DNA"/>
</dbReference>
<dbReference type="RefSeq" id="WP_002883524.1">
    <property type="nucleotide sequence ID" value="NC_009648.1"/>
</dbReference>
<dbReference type="SMR" id="A6TGN1"/>
<dbReference type="STRING" id="272620.KPN_04352"/>
<dbReference type="PaxDb" id="272620-KPN_04352"/>
<dbReference type="EnsemblBacteria" id="ABR79715">
    <property type="protein sequence ID" value="ABR79715"/>
    <property type="gene ID" value="KPN_04352"/>
</dbReference>
<dbReference type="KEGG" id="kpn:KPN_04352"/>
<dbReference type="HOGENOM" id="CLU_053818_1_1_6"/>
<dbReference type="UniPathway" id="UPA00241">
    <property type="reaction ID" value="UER00352"/>
</dbReference>
<dbReference type="Proteomes" id="UP000000265">
    <property type="component" value="Chromosome"/>
</dbReference>
<dbReference type="GO" id="GO:0005737">
    <property type="term" value="C:cytoplasm"/>
    <property type="evidence" value="ECO:0007669"/>
    <property type="project" value="UniProtKB-SubCell"/>
</dbReference>
<dbReference type="GO" id="GO:0005524">
    <property type="term" value="F:ATP binding"/>
    <property type="evidence" value="ECO:0007669"/>
    <property type="project" value="UniProtKB-UniRule"/>
</dbReference>
<dbReference type="GO" id="GO:0004594">
    <property type="term" value="F:pantothenate kinase activity"/>
    <property type="evidence" value="ECO:0007669"/>
    <property type="project" value="UniProtKB-UniRule"/>
</dbReference>
<dbReference type="GO" id="GO:0015937">
    <property type="term" value="P:coenzyme A biosynthetic process"/>
    <property type="evidence" value="ECO:0007669"/>
    <property type="project" value="UniProtKB-UniRule"/>
</dbReference>
<dbReference type="CDD" id="cd02025">
    <property type="entry name" value="PanK"/>
    <property type="match status" value="1"/>
</dbReference>
<dbReference type="FunFam" id="3.40.50.300:FF:000242">
    <property type="entry name" value="Pantothenate kinase"/>
    <property type="match status" value="1"/>
</dbReference>
<dbReference type="Gene3D" id="3.40.50.300">
    <property type="entry name" value="P-loop containing nucleotide triphosphate hydrolases"/>
    <property type="match status" value="1"/>
</dbReference>
<dbReference type="HAMAP" id="MF_00215">
    <property type="entry name" value="Pantothen_kinase_1"/>
    <property type="match status" value="1"/>
</dbReference>
<dbReference type="InterPro" id="IPR027417">
    <property type="entry name" value="P-loop_NTPase"/>
</dbReference>
<dbReference type="InterPro" id="IPR004566">
    <property type="entry name" value="PanK"/>
</dbReference>
<dbReference type="InterPro" id="IPR006083">
    <property type="entry name" value="PRK/URK"/>
</dbReference>
<dbReference type="NCBIfam" id="TIGR00554">
    <property type="entry name" value="panK_bact"/>
    <property type="match status" value="1"/>
</dbReference>
<dbReference type="PANTHER" id="PTHR10285">
    <property type="entry name" value="URIDINE KINASE"/>
    <property type="match status" value="1"/>
</dbReference>
<dbReference type="Pfam" id="PF00485">
    <property type="entry name" value="PRK"/>
    <property type="match status" value="1"/>
</dbReference>
<dbReference type="PIRSF" id="PIRSF000545">
    <property type="entry name" value="Pantothenate_kin"/>
    <property type="match status" value="1"/>
</dbReference>
<dbReference type="SUPFAM" id="SSF52540">
    <property type="entry name" value="P-loop containing nucleoside triphosphate hydrolases"/>
    <property type="match status" value="1"/>
</dbReference>
<reference key="1">
    <citation type="submission" date="2006-09" db="EMBL/GenBank/DDBJ databases">
        <authorList>
            <consortium name="The Klebsiella pneumonia Genome Sequencing Project"/>
            <person name="McClelland M."/>
            <person name="Sanderson E.K."/>
            <person name="Spieth J."/>
            <person name="Clifton W.S."/>
            <person name="Latreille P."/>
            <person name="Sabo A."/>
            <person name="Pepin K."/>
            <person name="Bhonagiri V."/>
            <person name="Porwollik S."/>
            <person name="Ali J."/>
            <person name="Wilson R.K."/>
        </authorList>
    </citation>
    <scope>NUCLEOTIDE SEQUENCE [LARGE SCALE GENOMIC DNA]</scope>
    <source>
        <strain>ATCC 700721 / MGH 78578</strain>
    </source>
</reference>
<protein>
    <recommendedName>
        <fullName evidence="1">Pantothenate kinase</fullName>
        <ecNumber evidence="1">2.7.1.33</ecNumber>
    </recommendedName>
    <alternativeName>
        <fullName evidence="1">Pantothenic acid kinase</fullName>
    </alternativeName>
</protein>
<accession>A6TGN1</accession>
<feature type="chain" id="PRO_0000325555" description="Pantothenate kinase">
    <location>
        <begin position="1"/>
        <end position="316"/>
    </location>
</feature>
<feature type="binding site" evidence="1">
    <location>
        <begin position="95"/>
        <end position="102"/>
    </location>
    <ligand>
        <name>ATP</name>
        <dbReference type="ChEBI" id="CHEBI:30616"/>
    </ligand>
</feature>
<organism>
    <name type="scientific">Klebsiella pneumoniae subsp. pneumoniae (strain ATCC 700721 / MGH 78578)</name>
    <dbReference type="NCBI Taxonomy" id="272620"/>
    <lineage>
        <taxon>Bacteria</taxon>
        <taxon>Pseudomonadati</taxon>
        <taxon>Pseudomonadota</taxon>
        <taxon>Gammaproteobacteria</taxon>
        <taxon>Enterobacterales</taxon>
        <taxon>Enterobacteriaceae</taxon>
        <taxon>Klebsiella/Raoultella group</taxon>
        <taxon>Klebsiella</taxon>
        <taxon>Klebsiella pneumoniae complex</taxon>
    </lineage>
</organism>
<keyword id="KW-0067">ATP-binding</keyword>
<keyword id="KW-0173">Coenzyme A biosynthesis</keyword>
<keyword id="KW-0963">Cytoplasm</keyword>
<keyword id="KW-0418">Kinase</keyword>
<keyword id="KW-0547">Nucleotide-binding</keyword>
<keyword id="KW-0808">Transferase</keyword>
<name>COAA_KLEP7</name>
<gene>
    <name evidence="1" type="primary">coaA</name>
    <name type="ordered locus">KPN78578_42910</name>
    <name type="ORF">KPN_04352</name>
</gene>
<evidence type="ECO:0000255" key="1">
    <source>
        <dbReference type="HAMAP-Rule" id="MF_00215"/>
    </source>
</evidence>
<evidence type="ECO:0000305" key="2"/>
<comment type="catalytic activity">
    <reaction evidence="1">
        <text>(R)-pantothenate + ATP = (R)-4'-phosphopantothenate + ADP + H(+)</text>
        <dbReference type="Rhea" id="RHEA:16373"/>
        <dbReference type="ChEBI" id="CHEBI:10986"/>
        <dbReference type="ChEBI" id="CHEBI:15378"/>
        <dbReference type="ChEBI" id="CHEBI:29032"/>
        <dbReference type="ChEBI" id="CHEBI:30616"/>
        <dbReference type="ChEBI" id="CHEBI:456216"/>
        <dbReference type="EC" id="2.7.1.33"/>
    </reaction>
</comment>
<comment type="pathway">
    <text evidence="1">Cofactor biosynthesis; coenzyme A biosynthesis; CoA from (R)-pantothenate: step 1/5.</text>
</comment>
<comment type="subcellular location">
    <subcellularLocation>
        <location evidence="1">Cytoplasm</location>
    </subcellularLocation>
</comment>
<comment type="similarity">
    <text evidence="1">Belongs to the prokaryotic pantothenate kinase family.</text>
</comment>
<comment type="sequence caution" evidence="2">
    <conflict type="erroneous initiation">
        <sequence resource="EMBL-CDS" id="ABR79715"/>
    </conflict>
</comment>